<keyword id="KW-0963">Cytoplasm</keyword>
<keyword id="KW-0456">Lyase</keyword>
<keyword id="KW-0670">Pyruvate</keyword>
<keyword id="KW-0831">Ubiquinone biosynthesis</keyword>
<feature type="chain" id="PRO_0000255908" description="Chorismate pyruvate-lyase">
    <location>
        <begin position="1"/>
        <end position="165"/>
    </location>
</feature>
<feature type="binding site" evidence="1">
    <location>
        <position position="35"/>
    </location>
    <ligand>
        <name>substrate</name>
    </ligand>
</feature>
<feature type="binding site" evidence="1">
    <location>
        <position position="77"/>
    </location>
    <ligand>
        <name>substrate</name>
    </ligand>
</feature>
<feature type="binding site" evidence="1">
    <location>
        <position position="115"/>
    </location>
    <ligand>
        <name>substrate</name>
    </ligand>
</feature>
<feature type="binding site" evidence="1">
    <location>
        <position position="156"/>
    </location>
    <ligand>
        <name>substrate</name>
    </ligand>
</feature>
<name>UBIC_ECOL5</name>
<proteinExistence type="inferred from homology"/>
<sequence>MSHPALTQLRALRYFTEIPALEPQLLDWLLLEDSMTKRFEQQGKTVSVTMIREGFVEQNEIPEELPLLPKESRYWLREILLCADGEPWLAGRTVVPVSTLSGPELALQKLGKTPLGRYLFTSSTLTRDFIEIGRDAGLWGRRSRLRLSGKPLLLTELFLPASPLY</sequence>
<dbReference type="EC" id="4.1.3.40" evidence="1"/>
<dbReference type="EMBL" id="CP000247">
    <property type="protein sequence ID" value="ABG72206.1"/>
    <property type="molecule type" value="Genomic_DNA"/>
</dbReference>
<dbReference type="RefSeq" id="WP_000019227.1">
    <property type="nucleotide sequence ID" value="NC_008253.1"/>
</dbReference>
<dbReference type="SMR" id="Q0TA23"/>
<dbReference type="KEGG" id="ecp:ECP_4256"/>
<dbReference type="HOGENOM" id="CLU_096824_1_0_6"/>
<dbReference type="UniPathway" id="UPA00232"/>
<dbReference type="Proteomes" id="UP000009182">
    <property type="component" value="Chromosome"/>
</dbReference>
<dbReference type="GO" id="GO:0005829">
    <property type="term" value="C:cytosol"/>
    <property type="evidence" value="ECO:0007669"/>
    <property type="project" value="TreeGrafter"/>
</dbReference>
<dbReference type="GO" id="GO:0008813">
    <property type="term" value="F:chorismate lyase activity"/>
    <property type="evidence" value="ECO:0007669"/>
    <property type="project" value="UniProtKB-UniRule"/>
</dbReference>
<dbReference type="GO" id="GO:0042866">
    <property type="term" value="P:pyruvate biosynthetic process"/>
    <property type="evidence" value="ECO:0007669"/>
    <property type="project" value="UniProtKB-UniRule"/>
</dbReference>
<dbReference type="GO" id="GO:0006744">
    <property type="term" value="P:ubiquinone biosynthetic process"/>
    <property type="evidence" value="ECO:0007669"/>
    <property type="project" value="UniProtKB-UniRule"/>
</dbReference>
<dbReference type="FunFam" id="3.40.1410.10:FF:000002">
    <property type="entry name" value="Chorismate pyruvate-lyase"/>
    <property type="match status" value="1"/>
</dbReference>
<dbReference type="Gene3D" id="3.40.1410.10">
    <property type="entry name" value="Chorismate lyase-like"/>
    <property type="match status" value="1"/>
</dbReference>
<dbReference type="HAMAP" id="MF_01632">
    <property type="entry name" value="UbiC"/>
    <property type="match status" value="1"/>
</dbReference>
<dbReference type="InterPro" id="IPR007440">
    <property type="entry name" value="Chorismate--pyruvate_lyase"/>
</dbReference>
<dbReference type="InterPro" id="IPR028978">
    <property type="entry name" value="Chorismate_lyase_/UTRA_dom_sf"/>
</dbReference>
<dbReference type="NCBIfam" id="NF008656">
    <property type="entry name" value="PRK11655.1"/>
    <property type="match status" value="1"/>
</dbReference>
<dbReference type="PANTHER" id="PTHR38683">
    <property type="entry name" value="CHORISMATE PYRUVATE-LYASE"/>
    <property type="match status" value="1"/>
</dbReference>
<dbReference type="PANTHER" id="PTHR38683:SF1">
    <property type="entry name" value="CHORISMATE PYRUVATE-LYASE"/>
    <property type="match status" value="1"/>
</dbReference>
<dbReference type="Pfam" id="PF04345">
    <property type="entry name" value="Chor_lyase"/>
    <property type="match status" value="1"/>
</dbReference>
<dbReference type="SUPFAM" id="SSF64288">
    <property type="entry name" value="Chorismate lyase-like"/>
    <property type="match status" value="1"/>
</dbReference>
<protein>
    <recommendedName>
        <fullName evidence="1">Chorismate pyruvate-lyase</fullName>
        <shortName evidence="1">CL</shortName>
        <shortName evidence="1">CPL</shortName>
        <ecNumber evidence="1">4.1.3.40</ecNumber>
    </recommendedName>
</protein>
<accession>Q0TA23</accession>
<evidence type="ECO:0000255" key="1">
    <source>
        <dbReference type="HAMAP-Rule" id="MF_01632"/>
    </source>
</evidence>
<comment type="function">
    <text evidence="1">Removes the pyruvyl group from chorismate, with concomitant aromatization of the ring, to provide 4-hydroxybenzoate (4HB) for the ubiquinone pathway.</text>
</comment>
<comment type="catalytic activity">
    <reaction evidence="1">
        <text>chorismate = 4-hydroxybenzoate + pyruvate</text>
        <dbReference type="Rhea" id="RHEA:16505"/>
        <dbReference type="ChEBI" id="CHEBI:15361"/>
        <dbReference type="ChEBI" id="CHEBI:17879"/>
        <dbReference type="ChEBI" id="CHEBI:29748"/>
        <dbReference type="EC" id="4.1.3.40"/>
    </reaction>
</comment>
<comment type="pathway">
    <text evidence="1">Cofactor biosynthesis; ubiquinone biosynthesis.</text>
</comment>
<comment type="subunit">
    <text evidence="1">Monomer.</text>
</comment>
<comment type="subcellular location">
    <subcellularLocation>
        <location evidence="1">Cytoplasm</location>
    </subcellularLocation>
</comment>
<comment type="similarity">
    <text evidence="1">Belongs to the UbiC family.</text>
</comment>
<organism>
    <name type="scientific">Escherichia coli O6:K15:H31 (strain 536 / UPEC)</name>
    <dbReference type="NCBI Taxonomy" id="362663"/>
    <lineage>
        <taxon>Bacteria</taxon>
        <taxon>Pseudomonadati</taxon>
        <taxon>Pseudomonadota</taxon>
        <taxon>Gammaproteobacteria</taxon>
        <taxon>Enterobacterales</taxon>
        <taxon>Enterobacteriaceae</taxon>
        <taxon>Escherichia</taxon>
    </lineage>
</organism>
<gene>
    <name evidence="1" type="primary">ubiC</name>
    <name type="ordered locus">ECP_4256</name>
</gene>
<reference key="1">
    <citation type="journal article" date="2006" name="Mol. Microbiol.">
        <title>Role of pathogenicity island-associated integrases in the genome plasticity of uropathogenic Escherichia coli strain 536.</title>
        <authorList>
            <person name="Hochhut B."/>
            <person name="Wilde C."/>
            <person name="Balling G."/>
            <person name="Middendorf B."/>
            <person name="Dobrindt U."/>
            <person name="Brzuszkiewicz E."/>
            <person name="Gottschalk G."/>
            <person name="Carniel E."/>
            <person name="Hacker J."/>
        </authorList>
    </citation>
    <scope>NUCLEOTIDE SEQUENCE [LARGE SCALE GENOMIC DNA]</scope>
    <source>
        <strain>536 / UPEC</strain>
    </source>
</reference>